<keyword id="KW-0028">Amino-acid biosynthesis</keyword>
<keyword id="KW-0055">Arginine biosynthesis</keyword>
<keyword id="KW-0170">Cobalt</keyword>
<keyword id="KW-0963">Cytoplasm</keyword>
<keyword id="KW-0378">Hydrolase</keyword>
<keyword id="KW-0479">Metal-binding</keyword>
<keyword id="KW-0862">Zinc</keyword>
<comment type="function">
    <text evidence="1">Catalyzes the hydrolysis of the amide bond of N(2)-acetylated L-amino acids. Cleaves the acetyl group from N-acetyl-L-ornithine to form L-ornithine, an intermediate in L-arginine biosynthesis pathway, and a branchpoint in the synthesis of polyamines.</text>
</comment>
<comment type="catalytic activity">
    <reaction evidence="1">
        <text>N(2)-acetyl-L-ornithine + H2O = L-ornithine + acetate</text>
        <dbReference type="Rhea" id="RHEA:15941"/>
        <dbReference type="ChEBI" id="CHEBI:15377"/>
        <dbReference type="ChEBI" id="CHEBI:30089"/>
        <dbReference type="ChEBI" id="CHEBI:46911"/>
        <dbReference type="ChEBI" id="CHEBI:57805"/>
        <dbReference type="EC" id="3.5.1.16"/>
    </reaction>
</comment>
<comment type="cofactor">
    <cofactor evidence="1">
        <name>Zn(2+)</name>
        <dbReference type="ChEBI" id="CHEBI:29105"/>
    </cofactor>
    <cofactor evidence="1">
        <name>Co(2+)</name>
        <dbReference type="ChEBI" id="CHEBI:48828"/>
    </cofactor>
    <text evidence="1">Binds 2 Zn(2+) or Co(2+) ions per subunit.</text>
</comment>
<comment type="cofactor">
    <cofactor evidence="1">
        <name>glutathione</name>
        <dbReference type="ChEBI" id="CHEBI:57925"/>
    </cofactor>
</comment>
<comment type="pathway">
    <text evidence="1">Amino-acid biosynthesis; L-arginine biosynthesis; L-ornithine from N(2)-acetyl-L-ornithine (linear): step 1/1.</text>
</comment>
<comment type="subunit">
    <text evidence="1">Homodimer.</text>
</comment>
<comment type="subcellular location">
    <subcellularLocation>
        <location evidence="1">Cytoplasm</location>
    </subcellularLocation>
</comment>
<comment type="similarity">
    <text evidence="1 2">Belongs to the peptidase M20A family. ArgE subfamily.</text>
</comment>
<accession>P59601</accession>
<organism>
    <name type="scientific">Vibrio parahaemolyticus serotype O3:K6 (strain RIMD 2210633)</name>
    <dbReference type="NCBI Taxonomy" id="223926"/>
    <lineage>
        <taxon>Bacteria</taxon>
        <taxon>Pseudomonadati</taxon>
        <taxon>Pseudomonadota</taxon>
        <taxon>Gammaproteobacteria</taxon>
        <taxon>Vibrionales</taxon>
        <taxon>Vibrionaceae</taxon>
        <taxon>Vibrio</taxon>
    </lineage>
</organism>
<reference key="1">
    <citation type="journal article" date="2003" name="Lancet">
        <title>Genome sequence of Vibrio parahaemolyticus: a pathogenic mechanism distinct from that of V. cholerae.</title>
        <authorList>
            <person name="Makino K."/>
            <person name="Oshima K."/>
            <person name="Kurokawa K."/>
            <person name="Yokoyama K."/>
            <person name="Uda T."/>
            <person name="Tagomori K."/>
            <person name="Iijima Y."/>
            <person name="Najima M."/>
            <person name="Nakano M."/>
            <person name="Yamashita A."/>
            <person name="Kubota Y."/>
            <person name="Kimura S."/>
            <person name="Yasunaga T."/>
            <person name="Honda T."/>
            <person name="Shinagawa H."/>
            <person name="Hattori M."/>
            <person name="Iida T."/>
        </authorList>
    </citation>
    <scope>NUCLEOTIDE SEQUENCE [LARGE SCALE GENOMIC DNA]</scope>
    <source>
        <strain>RIMD 2210633</strain>
    </source>
</reference>
<name>ARGE_VIBPA</name>
<dbReference type="EC" id="3.5.1.16" evidence="1"/>
<dbReference type="EMBL" id="BA000031">
    <property type="protein sequence ID" value="BAC61023.1"/>
    <property type="molecule type" value="Genomic_DNA"/>
</dbReference>
<dbReference type="RefSeq" id="NP_799139.1">
    <property type="nucleotide sequence ID" value="NC_004603.1"/>
</dbReference>
<dbReference type="RefSeq" id="WP_005465145.1">
    <property type="nucleotide sequence ID" value="NC_004603.1"/>
</dbReference>
<dbReference type="SMR" id="P59601"/>
<dbReference type="GeneID" id="1190310"/>
<dbReference type="KEGG" id="vpa:VP2760"/>
<dbReference type="PATRIC" id="fig|223926.6.peg.2656"/>
<dbReference type="eggNOG" id="COG0624">
    <property type="taxonomic scope" value="Bacteria"/>
</dbReference>
<dbReference type="HOGENOM" id="CLU_021802_2_4_6"/>
<dbReference type="UniPathway" id="UPA00068">
    <property type="reaction ID" value="UER00110"/>
</dbReference>
<dbReference type="Proteomes" id="UP000002493">
    <property type="component" value="Chromosome 1"/>
</dbReference>
<dbReference type="GO" id="GO:0005737">
    <property type="term" value="C:cytoplasm"/>
    <property type="evidence" value="ECO:0007669"/>
    <property type="project" value="UniProtKB-SubCell"/>
</dbReference>
<dbReference type="GO" id="GO:0008777">
    <property type="term" value="F:acetylornithine deacetylase activity"/>
    <property type="evidence" value="ECO:0007669"/>
    <property type="project" value="UniProtKB-UniRule"/>
</dbReference>
<dbReference type="GO" id="GO:0008270">
    <property type="term" value="F:zinc ion binding"/>
    <property type="evidence" value="ECO:0007669"/>
    <property type="project" value="UniProtKB-UniRule"/>
</dbReference>
<dbReference type="GO" id="GO:0006526">
    <property type="term" value="P:L-arginine biosynthetic process"/>
    <property type="evidence" value="ECO:0007669"/>
    <property type="project" value="UniProtKB-UniRule"/>
</dbReference>
<dbReference type="CDD" id="cd03894">
    <property type="entry name" value="M20_ArgE"/>
    <property type="match status" value="1"/>
</dbReference>
<dbReference type="FunFam" id="3.30.70.360:FF:000003">
    <property type="entry name" value="Acetylornithine deacetylase"/>
    <property type="match status" value="1"/>
</dbReference>
<dbReference type="Gene3D" id="3.30.70.360">
    <property type="match status" value="1"/>
</dbReference>
<dbReference type="Gene3D" id="3.40.630.10">
    <property type="entry name" value="Zn peptidases"/>
    <property type="match status" value="1"/>
</dbReference>
<dbReference type="HAMAP" id="MF_01108">
    <property type="entry name" value="ArgE"/>
    <property type="match status" value="1"/>
</dbReference>
<dbReference type="InterPro" id="IPR010169">
    <property type="entry name" value="AcOrn-deacetyl"/>
</dbReference>
<dbReference type="InterPro" id="IPR001261">
    <property type="entry name" value="ArgE/DapE_CS"/>
</dbReference>
<dbReference type="InterPro" id="IPR036264">
    <property type="entry name" value="Bact_exopeptidase_dim_dom"/>
</dbReference>
<dbReference type="InterPro" id="IPR002933">
    <property type="entry name" value="Peptidase_M20"/>
</dbReference>
<dbReference type="InterPro" id="IPR011650">
    <property type="entry name" value="Peptidase_M20_dimer"/>
</dbReference>
<dbReference type="InterPro" id="IPR050072">
    <property type="entry name" value="Peptidase_M20A"/>
</dbReference>
<dbReference type="NCBIfam" id="TIGR01892">
    <property type="entry name" value="AcOrn-deacetyl"/>
    <property type="match status" value="1"/>
</dbReference>
<dbReference type="NCBIfam" id="NF003474">
    <property type="entry name" value="PRK05111.1"/>
    <property type="match status" value="1"/>
</dbReference>
<dbReference type="PANTHER" id="PTHR43808">
    <property type="entry name" value="ACETYLORNITHINE DEACETYLASE"/>
    <property type="match status" value="1"/>
</dbReference>
<dbReference type="PANTHER" id="PTHR43808:SF1">
    <property type="entry name" value="ACETYLORNITHINE DEACETYLASE"/>
    <property type="match status" value="1"/>
</dbReference>
<dbReference type="Pfam" id="PF07687">
    <property type="entry name" value="M20_dimer"/>
    <property type="match status" value="1"/>
</dbReference>
<dbReference type="Pfam" id="PF01546">
    <property type="entry name" value="Peptidase_M20"/>
    <property type="match status" value="1"/>
</dbReference>
<dbReference type="SUPFAM" id="SSF55031">
    <property type="entry name" value="Bacterial exopeptidase dimerisation domain"/>
    <property type="match status" value="1"/>
</dbReference>
<dbReference type="SUPFAM" id="SSF53187">
    <property type="entry name" value="Zn-dependent exopeptidases"/>
    <property type="match status" value="1"/>
</dbReference>
<dbReference type="PROSITE" id="PS00758">
    <property type="entry name" value="ARGE_DAPE_CPG2_1"/>
    <property type="match status" value="1"/>
</dbReference>
<dbReference type="PROSITE" id="PS00759">
    <property type="entry name" value="ARGE_DAPE_CPG2_2"/>
    <property type="match status" value="1"/>
</dbReference>
<gene>
    <name evidence="1" type="primary">argE</name>
    <name type="ordered locus">VP2760</name>
</gene>
<evidence type="ECO:0000255" key="1">
    <source>
        <dbReference type="HAMAP-Rule" id="MF_01108"/>
    </source>
</evidence>
<evidence type="ECO:0000305" key="2"/>
<sequence length="378" mass="41882">MQLPTFLEVYEGLISTSSISSTDPSWDQGNAKVIEKLATWFKDLGFHVEVIEVESGKHNMIARMGEGEGGLLLAGHSDTVPFDEGRWSFDPHKLTEKDNRFYGLGTADMKGFFAFIYEAVKKVDWSKQNKPLYVLATCDEETTMLGARHFTTNAPFKPDYCIIGEPTSLVPIRGHKGHVANAIRVTGKSGHSSDPALGVNAIEIMHEVLFAMMQLRDKLIKEYHHPGFAIPSPTLNLGHIHGGDSANRICGCCELHYDVRPLPGISLDGLENMLRSALQEVEAKWPGRIDIVPLHEPIPGYECQHDHPFIGGVEEICQTSSQTVNYCTEAPFLQQLCPTLVLGPGSIEQAHQPDEFLSFDFIDPTIDVLSKAMVKYCC</sequence>
<protein>
    <recommendedName>
        <fullName evidence="1">Acetylornithine deacetylase</fullName>
        <shortName evidence="1">AO</shortName>
        <shortName evidence="1">Acetylornithinase</shortName>
        <ecNumber evidence="1">3.5.1.16</ecNumber>
    </recommendedName>
    <alternativeName>
        <fullName evidence="1">N-acetylornithinase</fullName>
        <shortName evidence="1">NAO</shortName>
    </alternativeName>
</protein>
<feature type="chain" id="PRO_0000185252" description="Acetylornithine deacetylase">
    <location>
        <begin position="1"/>
        <end position="378"/>
    </location>
</feature>
<feature type="active site" evidence="1">
    <location>
        <position position="78"/>
    </location>
</feature>
<feature type="active site" evidence="1">
    <location>
        <position position="140"/>
    </location>
</feature>
<feature type="binding site" evidence="1">
    <location>
        <position position="76"/>
    </location>
    <ligand>
        <name>Zn(2+)</name>
        <dbReference type="ChEBI" id="CHEBI:29105"/>
        <label>1</label>
    </ligand>
</feature>
<feature type="binding site" evidence="1">
    <location>
        <position position="108"/>
    </location>
    <ligand>
        <name>Zn(2+)</name>
        <dbReference type="ChEBI" id="CHEBI:29105"/>
        <label>1</label>
    </ligand>
</feature>
<feature type="binding site" evidence="1">
    <location>
        <position position="108"/>
    </location>
    <ligand>
        <name>Zn(2+)</name>
        <dbReference type="ChEBI" id="CHEBI:29105"/>
        <label>2</label>
    </ligand>
</feature>
<feature type="binding site" evidence="1">
    <location>
        <position position="141"/>
    </location>
    <ligand>
        <name>Zn(2+)</name>
        <dbReference type="ChEBI" id="CHEBI:29105"/>
        <label>2</label>
    </ligand>
</feature>
<feature type="binding site" evidence="1">
    <location>
        <position position="165"/>
    </location>
    <ligand>
        <name>Zn(2+)</name>
        <dbReference type="ChEBI" id="CHEBI:29105"/>
        <label>1</label>
    </ligand>
</feature>
<feature type="binding site" evidence="1">
    <location>
        <position position="351"/>
    </location>
    <ligand>
        <name>Zn(2+)</name>
        <dbReference type="ChEBI" id="CHEBI:29105"/>
        <label>2</label>
    </ligand>
</feature>
<proteinExistence type="inferred from homology"/>